<dbReference type="EC" id="7.1.1.-"/>
<dbReference type="EMBL" id="AE005174">
    <property type="protein sequence ID" value="AAG57406.1"/>
    <property type="molecule type" value="Genomic_DNA"/>
</dbReference>
<dbReference type="EMBL" id="BA000007">
    <property type="protein sequence ID" value="BAB36584.1"/>
    <property type="molecule type" value="Genomic_DNA"/>
</dbReference>
<dbReference type="PIR" id="A91024">
    <property type="entry name" value="A91024"/>
</dbReference>
<dbReference type="PIR" id="B85868">
    <property type="entry name" value="B85868"/>
</dbReference>
<dbReference type="RefSeq" id="NP_311188.1">
    <property type="nucleotide sequence ID" value="NC_002695.1"/>
</dbReference>
<dbReference type="RefSeq" id="WP_000926441.1">
    <property type="nucleotide sequence ID" value="NZ_VOAI01000001.1"/>
</dbReference>
<dbReference type="SMR" id="P0AFE9"/>
<dbReference type="STRING" id="155864.Z3536"/>
<dbReference type="GeneID" id="75205677"/>
<dbReference type="GeneID" id="916869"/>
<dbReference type="KEGG" id="ece:Z3536"/>
<dbReference type="KEGG" id="ecs:ECs_3161"/>
<dbReference type="PATRIC" id="fig|386585.9.peg.3299"/>
<dbReference type="eggNOG" id="COG1008">
    <property type="taxonomic scope" value="Bacteria"/>
</dbReference>
<dbReference type="HOGENOM" id="CLU_007100_4_4_6"/>
<dbReference type="OMA" id="ITRWGNQ"/>
<dbReference type="Proteomes" id="UP000000558">
    <property type="component" value="Chromosome"/>
</dbReference>
<dbReference type="Proteomes" id="UP000002519">
    <property type="component" value="Chromosome"/>
</dbReference>
<dbReference type="GO" id="GO:0005886">
    <property type="term" value="C:plasma membrane"/>
    <property type="evidence" value="ECO:0007669"/>
    <property type="project" value="UniProtKB-SubCell"/>
</dbReference>
<dbReference type="GO" id="GO:0008137">
    <property type="term" value="F:NADH dehydrogenase (ubiquinone) activity"/>
    <property type="evidence" value="ECO:0007669"/>
    <property type="project" value="InterPro"/>
</dbReference>
<dbReference type="GO" id="GO:0048039">
    <property type="term" value="F:ubiquinone binding"/>
    <property type="evidence" value="ECO:0007669"/>
    <property type="project" value="TreeGrafter"/>
</dbReference>
<dbReference type="GO" id="GO:0042773">
    <property type="term" value="P:ATP synthesis coupled electron transport"/>
    <property type="evidence" value="ECO:0007669"/>
    <property type="project" value="InterPro"/>
</dbReference>
<dbReference type="GO" id="GO:0015990">
    <property type="term" value="P:electron transport coupled proton transport"/>
    <property type="evidence" value="ECO:0007669"/>
    <property type="project" value="TreeGrafter"/>
</dbReference>
<dbReference type="InterPro" id="IPR010227">
    <property type="entry name" value="NADH_Q_OxRdtase_chainM/4"/>
</dbReference>
<dbReference type="InterPro" id="IPR003918">
    <property type="entry name" value="NADH_UbQ_OxRdtase"/>
</dbReference>
<dbReference type="InterPro" id="IPR001750">
    <property type="entry name" value="ND/Mrp_TM"/>
</dbReference>
<dbReference type="NCBIfam" id="TIGR01972">
    <property type="entry name" value="NDH_I_M"/>
    <property type="match status" value="1"/>
</dbReference>
<dbReference type="NCBIfam" id="NF004498">
    <property type="entry name" value="PRK05846.1-1"/>
    <property type="match status" value="1"/>
</dbReference>
<dbReference type="PANTHER" id="PTHR43507">
    <property type="entry name" value="NADH-UBIQUINONE OXIDOREDUCTASE CHAIN 4"/>
    <property type="match status" value="1"/>
</dbReference>
<dbReference type="PANTHER" id="PTHR43507:SF1">
    <property type="entry name" value="NADH-UBIQUINONE OXIDOREDUCTASE CHAIN 4"/>
    <property type="match status" value="1"/>
</dbReference>
<dbReference type="Pfam" id="PF00361">
    <property type="entry name" value="Proton_antipo_M"/>
    <property type="match status" value="1"/>
</dbReference>
<dbReference type="PRINTS" id="PR01437">
    <property type="entry name" value="NUOXDRDTASE4"/>
</dbReference>
<accession>P0AFE9</accession>
<accession>P31978</accession>
<accession>P78248</accession>
<keyword id="KW-0997">Cell inner membrane</keyword>
<keyword id="KW-1003">Cell membrane</keyword>
<keyword id="KW-0472">Membrane</keyword>
<keyword id="KW-0520">NAD</keyword>
<keyword id="KW-0874">Quinone</keyword>
<keyword id="KW-1185">Reference proteome</keyword>
<keyword id="KW-1278">Translocase</keyword>
<keyword id="KW-0812">Transmembrane</keyword>
<keyword id="KW-1133">Transmembrane helix</keyword>
<keyword id="KW-0830">Ubiquinone</keyword>
<gene>
    <name type="primary">nuoM</name>
    <name type="ordered locus">Z3536</name>
    <name type="ordered locus">ECs3161</name>
</gene>
<name>NUOM_ECO57</name>
<reference key="1">
    <citation type="journal article" date="2001" name="Nature">
        <title>Genome sequence of enterohaemorrhagic Escherichia coli O157:H7.</title>
        <authorList>
            <person name="Perna N.T."/>
            <person name="Plunkett G. III"/>
            <person name="Burland V."/>
            <person name="Mau B."/>
            <person name="Glasner J.D."/>
            <person name="Rose D.J."/>
            <person name="Mayhew G.F."/>
            <person name="Evans P.S."/>
            <person name="Gregor J."/>
            <person name="Kirkpatrick H.A."/>
            <person name="Posfai G."/>
            <person name="Hackett J."/>
            <person name="Klink S."/>
            <person name="Boutin A."/>
            <person name="Shao Y."/>
            <person name="Miller L."/>
            <person name="Grotbeck E.J."/>
            <person name="Davis N.W."/>
            <person name="Lim A."/>
            <person name="Dimalanta E.T."/>
            <person name="Potamousis K."/>
            <person name="Apodaca J."/>
            <person name="Anantharaman T.S."/>
            <person name="Lin J."/>
            <person name="Yen G."/>
            <person name="Schwartz D.C."/>
            <person name="Welch R.A."/>
            <person name="Blattner F.R."/>
        </authorList>
    </citation>
    <scope>NUCLEOTIDE SEQUENCE [LARGE SCALE GENOMIC DNA]</scope>
    <source>
        <strain>O157:H7 / EDL933 / ATCC 700927 / EHEC</strain>
    </source>
</reference>
<reference key="2">
    <citation type="journal article" date="2001" name="DNA Res.">
        <title>Complete genome sequence of enterohemorrhagic Escherichia coli O157:H7 and genomic comparison with a laboratory strain K-12.</title>
        <authorList>
            <person name="Hayashi T."/>
            <person name="Makino K."/>
            <person name="Ohnishi M."/>
            <person name="Kurokawa K."/>
            <person name="Ishii K."/>
            <person name="Yokoyama K."/>
            <person name="Han C.-G."/>
            <person name="Ohtsubo E."/>
            <person name="Nakayama K."/>
            <person name="Murata T."/>
            <person name="Tanaka M."/>
            <person name="Tobe T."/>
            <person name="Iida T."/>
            <person name="Takami H."/>
            <person name="Honda T."/>
            <person name="Sasakawa C."/>
            <person name="Ogasawara N."/>
            <person name="Yasunaga T."/>
            <person name="Kuhara S."/>
            <person name="Shiba T."/>
            <person name="Hattori M."/>
            <person name="Shinagawa H."/>
        </authorList>
    </citation>
    <scope>NUCLEOTIDE SEQUENCE [LARGE SCALE GENOMIC DNA]</scope>
    <source>
        <strain>O157:H7 / Sakai / RIMD 0509952 / EHEC</strain>
    </source>
</reference>
<feature type="chain" id="PRO_0000118040" description="NADH-quinone oxidoreductase subunit M">
    <location>
        <begin position="1"/>
        <end position="509"/>
    </location>
</feature>
<feature type="transmembrane region" description="Helical" evidence="2">
    <location>
        <begin position="1"/>
        <end position="21"/>
    </location>
</feature>
<feature type="topological domain" description="Cytoplasmic" evidence="2">
    <location>
        <begin position="22"/>
        <end position="29"/>
    </location>
</feature>
<feature type="transmembrane region" description="Helical" evidence="2">
    <location>
        <begin position="30"/>
        <end position="50"/>
    </location>
</feature>
<feature type="topological domain" description="Periplasmic" evidence="2">
    <location>
        <begin position="51"/>
        <end position="82"/>
    </location>
</feature>
<feature type="transmembrane region" description="Helical" evidence="2">
    <location>
        <begin position="83"/>
        <end position="103"/>
    </location>
</feature>
<feature type="topological domain" description="Cytoplasmic" evidence="2">
    <location>
        <begin position="104"/>
        <end position="121"/>
    </location>
</feature>
<feature type="transmembrane region" description="Helical" evidence="2">
    <location>
        <begin position="122"/>
        <end position="142"/>
    </location>
</feature>
<feature type="topological domain" description="Periplasmic" evidence="2">
    <location>
        <begin position="143"/>
        <end position="173"/>
    </location>
</feature>
<feature type="transmembrane region" description="Helical" evidence="2">
    <location>
        <begin position="174"/>
        <end position="194"/>
    </location>
</feature>
<feature type="topological domain" description="Cytoplasmic" evidence="2">
    <location>
        <begin position="195"/>
        <end position="221"/>
    </location>
</feature>
<feature type="transmembrane region" description="Helical" evidence="2">
    <location>
        <begin position="222"/>
        <end position="242"/>
    </location>
</feature>
<feature type="topological domain" description="Periplasmic" evidence="2">
    <location>
        <begin position="243"/>
        <end position="258"/>
    </location>
</feature>
<feature type="transmembrane region" description="Helical" evidence="2">
    <location>
        <begin position="259"/>
        <end position="279"/>
    </location>
</feature>
<feature type="topological domain" description="Cytoplasmic" evidence="2">
    <location>
        <begin position="280"/>
        <end position="285"/>
    </location>
</feature>
<feature type="transmembrane region" description="Helical" evidence="2">
    <location>
        <begin position="286"/>
        <end position="306"/>
    </location>
</feature>
<feature type="topological domain" description="Periplasmic" evidence="2">
    <location>
        <begin position="307"/>
        <end position="313"/>
    </location>
</feature>
<feature type="transmembrane region" description="Helical" evidence="2">
    <location>
        <begin position="314"/>
        <end position="334"/>
    </location>
</feature>
<feature type="topological domain" description="Cytoplasmic" evidence="2">
    <location>
        <begin position="335"/>
        <end position="339"/>
    </location>
</feature>
<feature type="transmembrane region" description="Helical" evidence="2">
    <location>
        <begin position="340"/>
        <end position="360"/>
    </location>
</feature>
<feature type="topological domain" description="Periplasmic" evidence="2">
    <location>
        <begin position="361"/>
        <end position="382"/>
    </location>
</feature>
<feature type="transmembrane region" description="Helical" evidence="2">
    <location>
        <begin position="383"/>
        <end position="403"/>
    </location>
</feature>
<feature type="transmembrane region" description="Helical" evidence="2">
    <location>
        <begin position="404"/>
        <end position="424"/>
    </location>
</feature>
<feature type="topological domain" description="Periplasmic" evidence="2">
    <location>
        <position position="425"/>
    </location>
</feature>
<feature type="transmembrane region" description="Helical" evidence="2">
    <location>
        <begin position="426"/>
        <end position="446"/>
    </location>
</feature>
<feature type="topological domain" description="Cytoplasmic" evidence="2">
    <location>
        <begin position="447"/>
        <end position="464"/>
    </location>
</feature>
<feature type="transmembrane region" description="Helical" evidence="2">
    <location>
        <begin position="465"/>
        <end position="485"/>
    </location>
</feature>
<feature type="topological domain" description="Periplasmic" evidence="2">
    <location>
        <begin position="486"/>
        <end position="509"/>
    </location>
</feature>
<evidence type="ECO:0000250" key="1"/>
<evidence type="ECO:0000255" key="2"/>
<evidence type="ECO:0000305" key="3"/>
<proteinExistence type="inferred from homology"/>
<organism>
    <name type="scientific">Escherichia coli O157:H7</name>
    <dbReference type="NCBI Taxonomy" id="83334"/>
    <lineage>
        <taxon>Bacteria</taxon>
        <taxon>Pseudomonadati</taxon>
        <taxon>Pseudomonadota</taxon>
        <taxon>Gammaproteobacteria</taxon>
        <taxon>Enterobacterales</taxon>
        <taxon>Enterobacteriaceae</taxon>
        <taxon>Escherichia</taxon>
    </lineage>
</organism>
<comment type="function">
    <text evidence="1">NDH-1 shuttles electrons from NADH, via FMN and iron-sulfur (Fe-S) centers, to quinones in the respiratory chain. The immediate electron acceptor for the enzyme in this species is believed to be ubiquinone. Couples the redox reaction to proton translocation (for every two electrons transferred, four hydrogen ions are translocated across the cytoplasmic membrane), and thus conserves the redox energy in a proton gradient (By similarity).</text>
</comment>
<comment type="catalytic activity">
    <reaction>
        <text>a quinone + NADH + 5 H(+)(in) = a quinol + NAD(+) + 4 H(+)(out)</text>
        <dbReference type="Rhea" id="RHEA:57888"/>
        <dbReference type="ChEBI" id="CHEBI:15378"/>
        <dbReference type="ChEBI" id="CHEBI:24646"/>
        <dbReference type="ChEBI" id="CHEBI:57540"/>
        <dbReference type="ChEBI" id="CHEBI:57945"/>
        <dbReference type="ChEBI" id="CHEBI:132124"/>
    </reaction>
</comment>
<comment type="subunit">
    <text evidence="1">Composed of 13 different subunits. Subunits NuoA, H, J, K, L, M, N constitute the membrane sector of the complex (By similarity).</text>
</comment>
<comment type="subcellular location">
    <subcellularLocation>
        <location evidence="1">Cell inner membrane</location>
        <topology evidence="1">Multi-pass membrane protein</topology>
    </subcellularLocation>
</comment>
<comment type="similarity">
    <text evidence="3">Belongs to the complex I subunit 4 family.</text>
</comment>
<protein>
    <recommendedName>
        <fullName>NADH-quinone oxidoreductase subunit M</fullName>
        <ecNumber>7.1.1.-</ecNumber>
    </recommendedName>
    <alternativeName>
        <fullName>NADH dehydrogenase I subunit M</fullName>
    </alternativeName>
    <alternativeName>
        <fullName>NDH-1 subunit M</fullName>
    </alternativeName>
    <alternativeName>
        <fullName>NUO13</fullName>
    </alternativeName>
</protein>
<sequence length="509" mass="56525">MLLPWLILIPFIGGFLCWQTERFGVKVPRWIALITMGLTLALSLQLWLQGGYSLTQSAGIPQWQSEFDMPWIPRFGISIHLAIDGLSLLMVVLTGLLGVLAVLCSWKEIEKYQGFFHLNLMWILGGVIGVFLAIDMFLFFFFWEMMLVPMYFLIALWGHKASDGKTRITAATKFFIYTQASGLVMLIAILALVFVHYNATGVWTFNYEELLNTPMSSGVEYLLMLGFFIAFAVKMPVVPLHGWLPDAHSQAPTAGSVDLAGILLKTAAYGLLRFSLPLFPNASAEFAPIAMWLGVIGIFYGAWMAFAQTDIKRLIAYTSVSHMGFVLIAIYTGSQLAYQGAVIQMIAHGLSAAGLFILCGQLYERIHTRDMRMMGGLWSKMKWLPALSLFFAVATLGMPGTGNFVGEFMILFGSFQVVPVITVISTFGLVFASVYSLAMLHRAYFGKAKSQIASQELPGMSLRELFMILLLVVLLVLLGFYPQPILDTSHSAIGNIQQWFVNSVTTTRP</sequence>